<sequence>MGLAWGLGVLLLLHACGSNRIPESGGDNSVFDIFELTGAARKRSGRRLVKGPDPSSPAFRIEDANLIPPVPDKKFQDLVDAVRAEKGFLLLASLRQMKKTRGTLLAVERKDHSGQVFSVISNGKAGTLDLSLTVQGKQHVVSVEEALLATGQWKSITLFVQEDRAQLYIDCEKMENAELDVPIQSIFTRDLASIARLRIAKGGVNDNFQGVLQNVRFVFGTTPEDILRNKGCSSSTSVFVTLDNNVVNGSSPAIRTDYIGHKTKDLQAICGISCDELSSMVLELRGLRTIVTTLQDSIRKVTEENKELANELRRPPLCYHNGVQYRTGDEWTVDSCTECRCQNSVTICKKVSCPIMPCSNATVPDGECCPRCWPSDSADDGWSPWSEWTSCSVTCGNGIQQRGRSCDSLNNRCEGSSVQTRTCHIQECDKRFKQDGGWSHWSPWSSCSVTCGDGVITRIRLCNSPSPQMNGKPCEGKARETKACQKDSCPINGGWGPWSPWDICSVTCGGGVQKRSRLCNNPKPQFGGKDCVGDVTENQICNKQDCPIDGCLSNPCFAGVQCTSYPDGSWKCGACPPGYSGDGVECKDVDECKEVPDACFNHNGEHRCENTDPGYNCLPCPPRFTGSQPFGRGVEHATANKQVCKPRNPCTDGTHDCNKNAKCNYLGHYSDPMYRCECKPGYAGNGIICGEDTDLDGWPNEDLLCVANATYHCRKDNCPNLPNSGQEDYDKDGIGDACDDDDDNDKIPDDRDNCPFHYNPAQYDYDRDDVGDRCDNCPYNHNPDQADTDNNGEGDACAADIDGDSILNERDNCQYVYNVDQKDTDMDGVGDQCDNCPLEHNPDQLDSDSDRIGDTCDNNQDIDEDGHQNNLDNCPYVPNANQADHDKDGKGDACDHDDDNDGIPDDRDNCRLVPNPDQKDSDGDGRGDACKDDFDQDKVPDIDDICPENVDISETDFRRFQMIPLDPKGTSQNDPNWVVRHQGKELVQTVNCDPGLAVGYDEFNAVDFSGTFFINTERDDDYAGFVFGYQSSSRFYVVMWKQVTQSYWDTNPTRAQGYSGLSVKVVNSTTGPGEHLRNALWHTGNTSGQVRTLWHDPRHIGWKDFTAYRWHLSHRPKTGFIRVVMYEGKKIMADSGPIYDKTYAGGRLGLFVFSQEMVFFSDLKYECRDS</sequence>
<reference key="1">
    <citation type="journal article" date="1998" name="Biochim. Biophys. Acta">
        <title>cDNA cloning of bovine thrombospondin 1 and its expression in odontoblasts and predentin.</title>
        <authorList>
            <person name="Ueno A."/>
            <person name="Yamashita K."/>
            <person name="Nagata T."/>
            <person name="Tsurumi C."/>
            <person name="Miwa Y."/>
            <person name="Kitamura S."/>
            <person name="Inoue H."/>
        </authorList>
    </citation>
    <scope>NUCLEOTIDE SEQUENCE [MRNA]</scope>
    <scope>TISSUE SPECIFICITY</scope>
    <source>
        <strain>Holstein</strain>
        <tissue>Tooth</tissue>
    </source>
</reference>
<reference key="2">
    <citation type="submission" date="1995-06" db="EMBL/GenBank/DDBJ databases">
        <title>Cloning and sequencing of bovine thrombospondin stimulatory effect of TGF-beta.</title>
        <authorList>
            <person name="Zafar R.S."/>
            <person name="Moll Y.D."/>
            <person name="Womack J.F."/>
            <person name="Walz D.A."/>
        </authorList>
    </citation>
    <scope>NUCLEOTIDE SEQUENCE [MRNA] OF 1-18 AND 710-1170</scope>
    <source>
        <tissue>Aortic endothelium</tissue>
    </source>
</reference>
<gene>
    <name type="primary">THBS1</name>
    <name type="synonym">TSP-1</name>
    <name type="synonym">TSP1</name>
</gene>
<feature type="signal peptide" evidence="1">
    <location>
        <begin position="1"/>
        <end position="18"/>
    </location>
</feature>
<feature type="chain" id="PRO_0000035841" description="Thrombospondin-1">
    <location>
        <begin position="19"/>
        <end position="1170"/>
    </location>
</feature>
<feature type="domain" description="Laminin G-like">
    <location>
        <begin position="65"/>
        <end position="270"/>
    </location>
</feature>
<feature type="domain" description="VWFC" evidence="7">
    <location>
        <begin position="316"/>
        <end position="373"/>
    </location>
</feature>
<feature type="domain" description="TSP type-1 1" evidence="6">
    <location>
        <begin position="379"/>
        <end position="429"/>
    </location>
</feature>
<feature type="domain" description="TSP type-1 2" evidence="6">
    <location>
        <begin position="435"/>
        <end position="490"/>
    </location>
</feature>
<feature type="domain" description="TSP type-1 3" evidence="6">
    <location>
        <begin position="492"/>
        <end position="547"/>
    </location>
</feature>
<feature type="domain" description="EGF-like 1" evidence="5">
    <location>
        <begin position="547"/>
        <end position="587"/>
    </location>
</feature>
<feature type="domain" description="EGF-like 2" evidence="5">
    <location>
        <begin position="646"/>
        <end position="690"/>
    </location>
</feature>
<feature type="repeat" description="TSP type-3 1">
    <location>
        <begin position="691"/>
        <end position="726"/>
    </location>
</feature>
<feature type="repeat" description="TSP type-3 2">
    <location>
        <begin position="727"/>
        <end position="762"/>
    </location>
</feature>
<feature type="repeat" description="TSP type-3 3">
    <location>
        <begin position="763"/>
        <end position="785"/>
    </location>
</feature>
<feature type="repeat" description="TSP type-3 4">
    <location>
        <begin position="786"/>
        <end position="821"/>
    </location>
</feature>
<feature type="repeat" description="TSP type-3 5">
    <location>
        <begin position="822"/>
        <end position="844"/>
    </location>
</feature>
<feature type="repeat" description="TSP type-3 6">
    <location>
        <begin position="845"/>
        <end position="882"/>
    </location>
</feature>
<feature type="repeat" description="TSP type-3 7">
    <location>
        <begin position="883"/>
        <end position="918"/>
    </location>
</feature>
<feature type="repeat" description="TSP type-3 8">
    <location>
        <begin position="919"/>
        <end position="954"/>
    </location>
</feature>
<feature type="domain" description="TSP C-terminal" evidence="8">
    <location>
        <begin position="958"/>
        <end position="1170"/>
    </location>
</feature>
<feature type="region of interest" description="Heparin-binding" evidence="1">
    <location>
        <begin position="47"/>
        <end position="95"/>
    </location>
</feature>
<feature type="region of interest" description="Disordered" evidence="9">
    <location>
        <begin position="839"/>
        <end position="944"/>
    </location>
</feature>
<feature type="short sequence motif" description="Cell attachment site" evidence="4">
    <location>
        <begin position="926"/>
        <end position="928"/>
    </location>
</feature>
<feature type="compositionally biased region" description="Basic and acidic residues" evidence="9">
    <location>
        <begin position="840"/>
        <end position="854"/>
    </location>
</feature>
<feature type="compositionally biased region" description="Basic and acidic residues" evidence="9">
    <location>
        <begin position="883"/>
        <end position="894"/>
    </location>
</feature>
<feature type="compositionally biased region" description="Basic and acidic residues" evidence="9">
    <location>
        <begin position="917"/>
        <end position="941"/>
    </location>
</feature>
<feature type="glycosylation site" description="N-linked (GlcNAc...) asparagine" evidence="4">
    <location>
        <position position="248"/>
    </location>
</feature>
<feature type="glycosylation site" description="N-linked (GlcNAc...) asparagine" evidence="4">
    <location>
        <position position="360"/>
    </location>
</feature>
<feature type="glycosylation site" description="O-linked (Xyl) serine" evidence="2">
    <location>
        <position position="553"/>
    </location>
</feature>
<feature type="glycosylation site" description="N-linked (GlcNAc...) asparagine" evidence="4">
    <location>
        <position position="708"/>
    </location>
</feature>
<feature type="glycosylation site" description="N-linked (GlcNAc...) asparagine" evidence="4">
    <location>
        <position position="1067"/>
    </location>
</feature>
<feature type="glycosylation site" description="N-linked (GlcNAc...) asparagine" evidence="4">
    <location>
        <position position="1085"/>
    </location>
</feature>
<feature type="disulfide bond" evidence="1">
    <location>
        <begin position="171"/>
        <end position="232"/>
    </location>
</feature>
<feature type="disulfide bond" description="Interchain" evidence="11">
    <location>
        <position position="270"/>
    </location>
</feature>
<feature type="disulfide bond" description="Interchain" evidence="11">
    <location>
        <position position="274"/>
    </location>
</feature>
<feature type="disulfide bond" evidence="1">
    <location>
        <begin position="391"/>
        <end position="423"/>
    </location>
</feature>
<feature type="disulfide bond" evidence="1">
    <location>
        <begin position="395"/>
        <end position="428"/>
    </location>
</feature>
<feature type="disulfide bond" evidence="1">
    <location>
        <begin position="406"/>
        <end position="413"/>
    </location>
</feature>
<feature type="disulfide bond" evidence="1">
    <location>
        <begin position="447"/>
        <end position="484"/>
    </location>
</feature>
<feature type="disulfide bond" evidence="1">
    <location>
        <begin position="451"/>
        <end position="489"/>
    </location>
</feature>
<feature type="disulfide bond" evidence="1">
    <location>
        <begin position="462"/>
        <end position="474"/>
    </location>
</feature>
<feature type="disulfide bond" evidence="1">
    <location>
        <begin position="504"/>
        <end position="541"/>
    </location>
</feature>
<feature type="disulfide bond" evidence="1">
    <location>
        <begin position="508"/>
        <end position="546"/>
    </location>
</feature>
<feature type="disulfide bond" evidence="1">
    <location>
        <begin position="519"/>
        <end position="531"/>
    </location>
</feature>
<feature type="disulfide bond" evidence="1">
    <location>
        <begin position="551"/>
        <end position="562"/>
    </location>
</feature>
<feature type="disulfide bond" evidence="1">
    <location>
        <begin position="556"/>
        <end position="572"/>
    </location>
</feature>
<feature type="disulfide bond" evidence="1">
    <location>
        <begin position="575"/>
        <end position="586"/>
    </location>
</feature>
<feature type="disulfide bond" evidence="1">
    <location>
        <begin position="592"/>
        <end position="608"/>
    </location>
</feature>
<feature type="disulfide bond" evidence="1">
    <location>
        <begin position="599"/>
        <end position="617"/>
    </location>
</feature>
<feature type="disulfide bond" evidence="1">
    <location>
        <begin position="620"/>
        <end position="644"/>
    </location>
</feature>
<feature type="disulfide bond" evidence="1">
    <location>
        <begin position="650"/>
        <end position="663"/>
    </location>
</feature>
<feature type="disulfide bond" evidence="1">
    <location>
        <begin position="657"/>
        <end position="676"/>
    </location>
</feature>
<feature type="disulfide bond" evidence="1">
    <location>
        <begin position="678"/>
        <end position="689"/>
    </location>
</feature>
<feature type="disulfide bond" evidence="1">
    <location>
        <begin position="705"/>
        <end position="713"/>
    </location>
</feature>
<feature type="disulfide bond" evidence="1">
    <location>
        <begin position="718"/>
        <end position="738"/>
    </location>
</feature>
<feature type="disulfide bond" evidence="1">
    <location>
        <begin position="754"/>
        <end position="774"/>
    </location>
</feature>
<feature type="disulfide bond" evidence="1">
    <location>
        <begin position="777"/>
        <end position="797"/>
    </location>
</feature>
<feature type="disulfide bond" evidence="1">
    <location>
        <begin position="813"/>
        <end position="833"/>
    </location>
</feature>
<feature type="disulfide bond" evidence="1">
    <location>
        <begin position="836"/>
        <end position="856"/>
    </location>
</feature>
<feature type="disulfide bond" evidence="1">
    <location>
        <begin position="874"/>
        <end position="894"/>
    </location>
</feature>
<feature type="disulfide bond" evidence="1">
    <location>
        <begin position="910"/>
        <end position="930"/>
    </location>
</feature>
<feature type="disulfide bond" evidence="1">
    <location>
        <begin position="946"/>
        <end position="1167"/>
    </location>
</feature>
<feature type="sequence conflict" description="In Ref. 2; CAA60950." evidence="11" ref="2">
    <original>S</original>
    <variation>G</variation>
    <location>
        <position position="805"/>
    </location>
</feature>
<dbReference type="EMBL" id="AB005287">
    <property type="protein sequence ID" value="BAA21115.1"/>
    <property type="molecule type" value="mRNA"/>
</dbReference>
<dbReference type="EMBL" id="X87618">
    <property type="protein sequence ID" value="CAA60950.1"/>
    <property type="molecule type" value="mRNA"/>
</dbReference>
<dbReference type="EMBL" id="X87619">
    <property type="protein sequence ID" value="CAA60951.1"/>
    <property type="molecule type" value="mRNA"/>
</dbReference>
<dbReference type="PIR" id="S55501">
    <property type="entry name" value="S55501"/>
</dbReference>
<dbReference type="RefSeq" id="NP_776621.1">
    <property type="nucleotide sequence ID" value="NM_174196.1"/>
</dbReference>
<dbReference type="SMR" id="Q28178"/>
<dbReference type="ComplexPortal" id="CPX-4107">
    <property type="entry name" value="Thrombospondin 1 complex"/>
</dbReference>
<dbReference type="CORUM" id="Q28178"/>
<dbReference type="FunCoup" id="Q28178">
    <property type="interactions" value="665"/>
</dbReference>
<dbReference type="IntAct" id="Q28178">
    <property type="interactions" value="1"/>
</dbReference>
<dbReference type="STRING" id="9913.ENSBTAP00000074010"/>
<dbReference type="GlyConnect" id="593">
    <property type="glycosylation" value="1 O-Glc glycan, 1 O-Linked glycan"/>
</dbReference>
<dbReference type="GlyCosmos" id="Q28178">
    <property type="glycosylation" value="5 sites, 2 glycans"/>
</dbReference>
<dbReference type="GlyGen" id="Q28178">
    <property type="glycosylation" value="5 sites"/>
</dbReference>
<dbReference type="PaxDb" id="9913-ENSBTAP00000002600"/>
<dbReference type="PeptideAtlas" id="Q28178"/>
<dbReference type="GeneID" id="281530"/>
<dbReference type="KEGG" id="bta:281530"/>
<dbReference type="CTD" id="7057"/>
<dbReference type="eggNOG" id="ENOG502QRK8">
    <property type="taxonomic scope" value="Eukaryota"/>
</dbReference>
<dbReference type="InParanoid" id="Q28178"/>
<dbReference type="OrthoDB" id="14563at2759"/>
<dbReference type="Proteomes" id="UP000009136">
    <property type="component" value="Unplaced"/>
</dbReference>
<dbReference type="GO" id="GO:0009986">
    <property type="term" value="C:cell surface"/>
    <property type="evidence" value="ECO:0007669"/>
    <property type="project" value="UniProtKB-SubCell"/>
</dbReference>
<dbReference type="GO" id="GO:0062023">
    <property type="term" value="C:collagen-containing extracellular matrix"/>
    <property type="evidence" value="ECO:0000318"/>
    <property type="project" value="GO_Central"/>
</dbReference>
<dbReference type="GO" id="GO:0005783">
    <property type="term" value="C:endoplasmic reticulum"/>
    <property type="evidence" value="ECO:0000250"/>
    <property type="project" value="UniProtKB"/>
</dbReference>
<dbReference type="GO" id="GO:0031012">
    <property type="term" value="C:extracellular matrix"/>
    <property type="evidence" value="ECO:0000250"/>
    <property type="project" value="UniProtKB"/>
</dbReference>
<dbReference type="GO" id="GO:0005576">
    <property type="term" value="C:extracellular region"/>
    <property type="evidence" value="ECO:0007669"/>
    <property type="project" value="UniProtKB-SubCell"/>
</dbReference>
<dbReference type="GO" id="GO:0016529">
    <property type="term" value="C:sarcoplasmic reticulum"/>
    <property type="evidence" value="ECO:0000250"/>
    <property type="project" value="UniProtKB"/>
</dbReference>
<dbReference type="GO" id="GO:0005509">
    <property type="term" value="F:calcium ion binding"/>
    <property type="evidence" value="ECO:0007669"/>
    <property type="project" value="InterPro"/>
</dbReference>
<dbReference type="GO" id="GO:0001968">
    <property type="term" value="F:fibronectin binding"/>
    <property type="evidence" value="ECO:0000250"/>
    <property type="project" value="UniProtKB"/>
</dbReference>
<dbReference type="GO" id="GO:0008201">
    <property type="term" value="F:heparin binding"/>
    <property type="evidence" value="ECO:0007669"/>
    <property type="project" value="UniProtKB-KW"/>
</dbReference>
<dbReference type="GO" id="GO:0048266">
    <property type="term" value="P:behavioral response to pain"/>
    <property type="evidence" value="ECO:0000250"/>
    <property type="project" value="UniProtKB"/>
</dbReference>
<dbReference type="GO" id="GO:0007155">
    <property type="term" value="P:cell adhesion"/>
    <property type="evidence" value="ECO:0007669"/>
    <property type="project" value="UniProtKB-KW"/>
</dbReference>
<dbReference type="GO" id="GO:0016525">
    <property type="term" value="P:negative regulation of angiogenesis"/>
    <property type="evidence" value="ECO:0000318"/>
    <property type="project" value="GO_Central"/>
</dbReference>
<dbReference type="GO" id="GO:0034976">
    <property type="term" value="P:response to endoplasmic reticulum stress"/>
    <property type="evidence" value="ECO:0000250"/>
    <property type="project" value="UniProtKB"/>
</dbReference>
<dbReference type="GO" id="GO:0006986">
    <property type="term" value="P:response to unfolded protein"/>
    <property type="evidence" value="ECO:0007669"/>
    <property type="project" value="UniProtKB-KW"/>
</dbReference>
<dbReference type="CDD" id="cd00054">
    <property type="entry name" value="EGF_CA"/>
    <property type="match status" value="1"/>
</dbReference>
<dbReference type="FunFam" id="2.20.100.10:FF:000007">
    <property type="entry name" value="Thrombospondin 1"/>
    <property type="match status" value="2"/>
</dbReference>
<dbReference type="FunFam" id="2.60.120.200:FF:000009">
    <property type="entry name" value="Thrombospondin 1"/>
    <property type="match status" value="1"/>
</dbReference>
<dbReference type="FunFam" id="2.10.25.10:FF:000070">
    <property type="entry name" value="Thrombospondin 2"/>
    <property type="match status" value="1"/>
</dbReference>
<dbReference type="FunFam" id="4.10.1080.10:FF:000003">
    <property type="entry name" value="Thrombospondin 2"/>
    <property type="match status" value="1"/>
</dbReference>
<dbReference type="FunFam" id="2.10.25.10:FF:000025">
    <property type="entry name" value="Thrombospondin 3"/>
    <property type="match status" value="1"/>
</dbReference>
<dbReference type="FunFam" id="2.10.25.10:FF:000027">
    <property type="entry name" value="Thrombospondin 3"/>
    <property type="match status" value="1"/>
</dbReference>
<dbReference type="FunFam" id="4.10.1080.10:FF:000001">
    <property type="entry name" value="Thrombospondin 3"/>
    <property type="match status" value="1"/>
</dbReference>
<dbReference type="FunFam" id="2.20.100.10:FF:000115">
    <property type="entry name" value="Thrombospondin type-1 domain-containing protein 1"/>
    <property type="match status" value="1"/>
</dbReference>
<dbReference type="FunFam" id="2.60.120.200:FF:000041">
    <property type="entry name" value="thrombospondin-1"/>
    <property type="match status" value="1"/>
</dbReference>
<dbReference type="Gene3D" id="2.60.120.200">
    <property type="match status" value="2"/>
</dbReference>
<dbReference type="Gene3D" id="6.20.200.20">
    <property type="match status" value="1"/>
</dbReference>
<dbReference type="Gene3D" id="2.10.25.10">
    <property type="entry name" value="Laminin"/>
    <property type="match status" value="3"/>
</dbReference>
<dbReference type="Gene3D" id="2.20.100.10">
    <property type="entry name" value="Thrombospondin type-1 (TSP1) repeat"/>
    <property type="match status" value="3"/>
</dbReference>
<dbReference type="Gene3D" id="4.10.1080.10">
    <property type="entry name" value="TSP type-3 repeat"/>
    <property type="match status" value="2"/>
</dbReference>
<dbReference type="InterPro" id="IPR013320">
    <property type="entry name" value="ConA-like_dom_sf"/>
</dbReference>
<dbReference type="InterPro" id="IPR001881">
    <property type="entry name" value="EGF-like_Ca-bd_dom"/>
</dbReference>
<dbReference type="InterPro" id="IPR000742">
    <property type="entry name" value="EGF-like_dom"/>
</dbReference>
<dbReference type="InterPro" id="IPR003367">
    <property type="entry name" value="Thrombospondin_3-like_rpt"/>
</dbReference>
<dbReference type="InterPro" id="IPR017897">
    <property type="entry name" value="Thrombospondin_3_rpt"/>
</dbReference>
<dbReference type="InterPro" id="IPR008859">
    <property type="entry name" value="Thrombospondin_C"/>
</dbReference>
<dbReference type="InterPro" id="IPR000884">
    <property type="entry name" value="TSP1_rpt"/>
</dbReference>
<dbReference type="InterPro" id="IPR036383">
    <property type="entry name" value="TSP1_rpt_sf"/>
</dbReference>
<dbReference type="InterPro" id="IPR028974">
    <property type="entry name" value="TSP_type-3_rpt"/>
</dbReference>
<dbReference type="InterPro" id="IPR048287">
    <property type="entry name" value="TSPN-like_N"/>
</dbReference>
<dbReference type="InterPro" id="IPR001007">
    <property type="entry name" value="VWF_dom"/>
</dbReference>
<dbReference type="PANTHER" id="PTHR10199">
    <property type="entry name" value="THROMBOSPONDIN"/>
    <property type="match status" value="1"/>
</dbReference>
<dbReference type="PANTHER" id="PTHR10199:SF78">
    <property type="entry name" value="THROMBOSPONDIN-1"/>
    <property type="match status" value="1"/>
</dbReference>
<dbReference type="Pfam" id="PF00090">
    <property type="entry name" value="TSP_1"/>
    <property type="match status" value="3"/>
</dbReference>
<dbReference type="Pfam" id="PF02412">
    <property type="entry name" value="TSP_3"/>
    <property type="match status" value="6"/>
</dbReference>
<dbReference type="Pfam" id="PF05735">
    <property type="entry name" value="TSP_C"/>
    <property type="match status" value="1"/>
</dbReference>
<dbReference type="Pfam" id="PF00093">
    <property type="entry name" value="VWC"/>
    <property type="match status" value="1"/>
</dbReference>
<dbReference type="PRINTS" id="PR01705">
    <property type="entry name" value="TSP1REPEAT"/>
</dbReference>
<dbReference type="SMART" id="SM00181">
    <property type="entry name" value="EGF"/>
    <property type="match status" value="3"/>
</dbReference>
<dbReference type="SMART" id="SM00179">
    <property type="entry name" value="EGF_CA"/>
    <property type="match status" value="2"/>
</dbReference>
<dbReference type="SMART" id="SM00209">
    <property type="entry name" value="TSP1"/>
    <property type="match status" value="3"/>
</dbReference>
<dbReference type="SMART" id="SM00210">
    <property type="entry name" value="TSPN"/>
    <property type="match status" value="1"/>
</dbReference>
<dbReference type="SMART" id="SM00214">
    <property type="entry name" value="VWC"/>
    <property type="match status" value="1"/>
</dbReference>
<dbReference type="SUPFAM" id="SSF49899">
    <property type="entry name" value="Concanavalin A-like lectins/glucanases"/>
    <property type="match status" value="2"/>
</dbReference>
<dbReference type="SUPFAM" id="SSF57196">
    <property type="entry name" value="EGF/Laminin"/>
    <property type="match status" value="1"/>
</dbReference>
<dbReference type="SUPFAM" id="SSF57603">
    <property type="entry name" value="FnI-like domain"/>
    <property type="match status" value="1"/>
</dbReference>
<dbReference type="SUPFAM" id="SSF103647">
    <property type="entry name" value="TSP type-3 repeat"/>
    <property type="match status" value="3"/>
</dbReference>
<dbReference type="SUPFAM" id="SSF82895">
    <property type="entry name" value="TSP-1 type 1 repeat"/>
    <property type="match status" value="3"/>
</dbReference>
<dbReference type="PROSITE" id="PS01186">
    <property type="entry name" value="EGF_2"/>
    <property type="match status" value="1"/>
</dbReference>
<dbReference type="PROSITE" id="PS50026">
    <property type="entry name" value="EGF_3"/>
    <property type="match status" value="2"/>
</dbReference>
<dbReference type="PROSITE" id="PS50092">
    <property type="entry name" value="TSP1"/>
    <property type="match status" value="3"/>
</dbReference>
<dbReference type="PROSITE" id="PS51234">
    <property type="entry name" value="TSP3"/>
    <property type="match status" value="8"/>
</dbReference>
<dbReference type="PROSITE" id="PS51236">
    <property type="entry name" value="TSP_CTER"/>
    <property type="match status" value="1"/>
</dbReference>
<dbReference type="PROSITE" id="PS01208">
    <property type="entry name" value="VWFC_1"/>
    <property type="match status" value="1"/>
</dbReference>
<dbReference type="PROSITE" id="PS50184">
    <property type="entry name" value="VWFC_2"/>
    <property type="match status" value="1"/>
</dbReference>
<keyword id="KW-0106">Calcium</keyword>
<keyword id="KW-0130">Cell adhesion</keyword>
<keyword id="KW-1015">Disulfide bond</keyword>
<keyword id="KW-0245">EGF-like domain</keyword>
<keyword id="KW-0256">Endoplasmic reticulum</keyword>
<keyword id="KW-0272">Extracellular matrix</keyword>
<keyword id="KW-0325">Glycoprotein</keyword>
<keyword id="KW-0358">Heparin-binding</keyword>
<keyword id="KW-1185">Reference proteome</keyword>
<keyword id="KW-0677">Repeat</keyword>
<keyword id="KW-0703">Sarcoplasmic reticulum</keyword>
<keyword id="KW-0964">Secreted</keyword>
<keyword id="KW-0732">Signal</keyword>
<keyword id="KW-0834">Unfolded protein response</keyword>
<protein>
    <recommendedName>
        <fullName>Thrombospondin-1</fullName>
    </recommendedName>
    <alternativeName>
        <fullName evidence="2">Glycoprotein G</fullName>
    </alternativeName>
</protein>
<proteinExistence type="evidence at transcript level"/>
<organism>
    <name type="scientific">Bos taurus</name>
    <name type="common">Bovine</name>
    <dbReference type="NCBI Taxonomy" id="9913"/>
    <lineage>
        <taxon>Eukaryota</taxon>
        <taxon>Metazoa</taxon>
        <taxon>Chordata</taxon>
        <taxon>Craniata</taxon>
        <taxon>Vertebrata</taxon>
        <taxon>Euteleostomi</taxon>
        <taxon>Mammalia</taxon>
        <taxon>Eutheria</taxon>
        <taxon>Laurasiatheria</taxon>
        <taxon>Artiodactyla</taxon>
        <taxon>Ruminantia</taxon>
        <taxon>Pecora</taxon>
        <taxon>Bovidae</taxon>
        <taxon>Bovinae</taxon>
        <taxon>Bos</taxon>
    </lineage>
</organism>
<name>TSP1_BOVIN</name>
<accession>Q28178</accession>
<accession>Q28179</accession>
<comment type="function">
    <text evidence="2 3">Adhesive glycoprotein that mediates cell-to-cell and cell-to-matrix interactions. Multifunctional, involved in inflammation, angiogenesis, wound healing, reactive oxygen species (ROS) signaling, nitrous oxide (NO) signaling, apoptosis, senescence, aging, cellular self-renewal, stemness, and cardiovascular and metabolic homeostasis. Negatively modulates dendritic cell activation and cytokine release, as part of an autocrine feedback loop, contributing to the resolution of inflammation and immune homeostasis. Ligand for receptor CD47 (By similarity). Modulates nitrous oxide (NO) signaling via CD47, hence playing a role as a pressor agent, supporting blood pressure (By similarity). Plays a role in endothelial cell senescence, acting via CD47, by increasing the abundance and activation of NADPH oxidase NOX1, and so generating excess ROS (By similarity). Inhibits stem cell self-renewal, acting via CD47 signaling, probably by regulation of the stem cell transcription factors POU5F1/OCT4, SOX2, MYC/c-Myc and KLF4. Negatively modulates wound healing, acting via CD47 (By similarity). Ligand for receptor CD36 (By similarity). Involved in inducing apoptosis in podocytes in response to elevated free fatty acids, acting via CD36 (By similarity). Plays a role in suppressing angiogenesis, acting, depending on context, via CD36 or CD47. Promotes cellular senescence in a TP53-CDKN1A-RB1 signaling-dependent manner. Ligand for immunoglobulin-like cell surface receptor SIRPA. Involved in ROS signaling in non-phagocytic cells, stimulating NADPH oxidase-derived ROS production, acting via interaction with SIRPA (By similarity). Plays a role in metabolic dysfunction in diet-induced obesity, perhaps acting by exacerbating adipose inflammatory activity; its effects may be mediated, at least in part, through enhanced adipocyte proliferation. Plays a role in ER stress response, via its interaction with the activating transcription factor 6 alpha (ATF6) which produces adaptive ER stress response factors (By similarity). May be involved in age-related conditions, including metabolic dysregulation, during normal aging (By similarity).</text>
</comment>
<comment type="subunit">
    <text evidence="2 3">Homotrimer; disulfide-linked. Can bind to fibrinogen, fibronectin, laminin, type V collagen and integrins alpha-V/beta-1, alpha-V/beta-3 and alpha-IIb/beta-3. Binds heparin. Interacts (via the C-terminal domain) with CD47. Interacts (via the TSP type I repeats) with CD36; the interaction conveys an antiangiogenic effect. Interacts (via the TSP type I repeats) with HRG; the interaction blocks the antiangiogenic effect of THBS1 with CD36 (By similarity). Interacts with ATF6 (via lumenal domain) (By similarity). Interacts with FN1; this interaction is enhanced by TNFAIP6, which may act as a bridging molecule between FN1 and THBS1. Interacts with SIRPA; the interaction stimulates phosphorylation of SIRPA (By similarity).</text>
</comment>
<comment type="subcellular location">
    <subcellularLocation>
        <location evidence="2">Secreted</location>
    </subcellularLocation>
    <subcellularLocation>
        <location evidence="2">Cell surface</location>
    </subcellularLocation>
    <subcellularLocation>
        <location evidence="2">Secreted</location>
        <location evidence="2">Extracellular space</location>
        <location evidence="2">Extracellular matrix</location>
    </subcellularLocation>
    <subcellularLocation>
        <location evidence="3">Endoplasmic reticulum</location>
    </subcellularLocation>
    <subcellularLocation>
        <location evidence="3">Sarcoplasmic reticulum</location>
    </subcellularLocation>
    <text evidence="2 3">Secreted by thrombin-activated platelets and binds to the cell surface in the presence of extracellular Ca(2+). Incorporated into the extracellular matrix (ECM) of fibroblasts. The C-terminal region in trimeric form is required for retention in the ECM (By similarity). Also detected in the endoplasmic reticulum and sarcoplasmic reticulum where it plays a role in the ER stress response (By similarity).</text>
</comment>
<comment type="tissue specificity">
    <text evidence="10">Odontoblasts.</text>
</comment>
<comment type="similarity">
    <text evidence="11">Belongs to the thrombospondin family.</text>
</comment>
<evidence type="ECO:0000250" key="1"/>
<evidence type="ECO:0000250" key="2">
    <source>
        <dbReference type="UniProtKB" id="P07996"/>
    </source>
</evidence>
<evidence type="ECO:0000250" key="3">
    <source>
        <dbReference type="UniProtKB" id="P35441"/>
    </source>
</evidence>
<evidence type="ECO:0000255" key="4"/>
<evidence type="ECO:0000255" key="5">
    <source>
        <dbReference type="PROSITE-ProRule" id="PRU00076"/>
    </source>
</evidence>
<evidence type="ECO:0000255" key="6">
    <source>
        <dbReference type="PROSITE-ProRule" id="PRU00210"/>
    </source>
</evidence>
<evidence type="ECO:0000255" key="7">
    <source>
        <dbReference type="PROSITE-ProRule" id="PRU00220"/>
    </source>
</evidence>
<evidence type="ECO:0000255" key="8">
    <source>
        <dbReference type="PROSITE-ProRule" id="PRU00635"/>
    </source>
</evidence>
<evidence type="ECO:0000256" key="9">
    <source>
        <dbReference type="SAM" id="MobiDB-lite"/>
    </source>
</evidence>
<evidence type="ECO:0000269" key="10">
    <source>
    </source>
</evidence>
<evidence type="ECO:0000305" key="11"/>